<name>YOSR_BACSU</name>
<gene>
    <name type="primary">yosR</name>
    <name type="synonym">yojT</name>
    <name type="ordered locus">BSU20030</name>
</gene>
<keyword id="KW-1015">Disulfide bond</keyword>
<keyword id="KW-0676">Redox-active center</keyword>
<keyword id="KW-1185">Reference proteome</keyword>
<accession>O34342</accession>
<accession>Q7BVQ0</accession>
<dbReference type="EMBL" id="AF012906">
    <property type="protein sequence ID" value="AAB92487.1"/>
    <property type="molecule type" value="Genomic_DNA"/>
</dbReference>
<dbReference type="EMBL" id="AL009126">
    <property type="protein sequence ID" value="CAB13894.1"/>
    <property type="molecule type" value="Genomic_DNA"/>
</dbReference>
<dbReference type="RefSeq" id="NP_389884.1">
    <property type="nucleotide sequence ID" value="NC_000964.3"/>
</dbReference>
<dbReference type="RefSeq" id="WP_004399328.1">
    <property type="nucleotide sequence ID" value="NZ_OZ025638.1"/>
</dbReference>
<dbReference type="SMR" id="O34342"/>
<dbReference type="FunCoup" id="O34342">
    <property type="interactions" value="89"/>
</dbReference>
<dbReference type="STRING" id="224308.BSU20030"/>
<dbReference type="PaxDb" id="224308-BSU20030"/>
<dbReference type="KEGG" id="bsu:BSU20030"/>
<dbReference type="PATRIC" id="fig|224308.179.peg.2191"/>
<dbReference type="eggNOG" id="COG0526">
    <property type="taxonomic scope" value="Bacteria"/>
</dbReference>
<dbReference type="InParanoid" id="O34342"/>
<dbReference type="OrthoDB" id="9814618at2"/>
<dbReference type="PhylomeDB" id="O34342"/>
<dbReference type="BioCyc" id="BSUB:BSU20030-MONOMER"/>
<dbReference type="Proteomes" id="UP000001570">
    <property type="component" value="Chromosome"/>
</dbReference>
<dbReference type="CDD" id="cd02947">
    <property type="entry name" value="TRX_family"/>
    <property type="match status" value="1"/>
</dbReference>
<dbReference type="Gene3D" id="3.40.30.10">
    <property type="entry name" value="Glutaredoxin"/>
    <property type="match status" value="1"/>
</dbReference>
<dbReference type="InterPro" id="IPR036249">
    <property type="entry name" value="Thioredoxin-like_sf"/>
</dbReference>
<dbReference type="InterPro" id="IPR013766">
    <property type="entry name" value="Thioredoxin_domain"/>
</dbReference>
<dbReference type="Pfam" id="PF00085">
    <property type="entry name" value="Thioredoxin"/>
    <property type="match status" value="1"/>
</dbReference>
<dbReference type="SUPFAM" id="SSF52833">
    <property type="entry name" value="Thioredoxin-like"/>
    <property type="match status" value="1"/>
</dbReference>
<sequence length="80" mass="9091">MRLIKLEQPNCNPCKMVSNYLEQVNIQFETVDVTQEPEVAARFGVMGVPVTILLSDQGEEVNRSVGFKPNELDELLKELR</sequence>
<reference key="1">
    <citation type="journal article" date="1998" name="DNA Res.">
        <title>An 8 kb nucleotide sequence at the 3' flanking region of the sspC gene (184 degrees) on the Bacillus subtilis 168 chromosome containing an intein and an intron.</title>
        <authorList>
            <person name="Ghim S.-Y."/>
            <person name="Choi S.-K."/>
            <person name="Shin B.-S."/>
            <person name="Park S.-H."/>
        </authorList>
    </citation>
    <scope>NUCLEOTIDE SEQUENCE [GENOMIC DNA]</scope>
    <source>
        <strain>168</strain>
    </source>
</reference>
<reference key="2">
    <citation type="journal article" date="1997" name="Nature">
        <title>The complete genome sequence of the Gram-positive bacterium Bacillus subtilis.</title>
        <authorList>
            <person name="Kunst F."/>
            <person name="Ogasawara N."/>
            <person name="Moszer I."/>
            <person name="Albertini A.M."/>
            <person name="Alloni G."/>
            <person name="Azevedo V."/>
            <person name="Bertero M.G."/>
            <person name="Bessieres P."/>
            <person name="Bolotin A."/>
            <person name="Borchert S."/>
            <person name="Borriss R."/>
            <person name="Boursier L."/>
            <person name="Brans A."/>
            <person name="Braun M."/>
            <person name="Brignell S.C."/>
            <person name="Bron S."/>
            <person name="Brouillet S."/>
            <person name="Bruschi C.V."/>
            <person name="Caldwell B."/>
            <person name="Capuano V."/>
            <person name="Carter N.M."/>
            <person name="Choi S.-K."/>
            <person name="Codani J.-J."/>
            <person name="Connerton I.F."/>
            <person name="Cummings N.J."/>
            <person name="Daniel R.A."/>
            <person name="Denizot F."/>
            <person name="Devine K.M."/>
            <person name="Duesterhoeft A."/>
            <person name="Ehrlich S.D."/>
            <person name="Emmerson P.T."/>
            <person name="Entian K.-D."/>
            <person name="Errington J."/>
            <person name="Fabret C."/>
            <person name="Ferrari E."/>
            <person name="Foulger D."/>
            <person name="Fritz C."/>
            <person name="Fujita M."/>
            <person name="Fujita Y."/>
            <person name="Fuma S."/>
            <person name="Galizzi A."/>
            <person name="Galleron N."/>
            <person name="Ghim S.-Y."/>
            <person name="Glaser P."/>
            <person name="Goffeau A."/>
            <person name="Golightly E.J."/>
            <person name="Grandi G."/>
            <person name="Guiseppi G."/>
            <person name="Guy B.J."/>
            <person name="Haga K."/>
            <person name="Haiech J."/>
            <person name="Harwood C.R."/>
            <person name="Henaut A."/>
            <person name="Hilbert H."/>
            <person name="Holsappel S."/>
            <person name="Hosono S."/>
            <person name="Hullo M.-F."/>
            <person name="Itaya M."/>
            <person name="Jones L.-M."/>
            <person name="Joris B."/>
            <person name="Karamata D."/>
            <person name="Kasahara Y."/>
            <person name="Klaerr-Blanchard M."/>
            <person name="Klein C."/>
            <person name="Kobayashi Y."/>
            <person name="Koetter P."/>
            <person name="Koningstein G."/>
            <person name="Krogh S."/>
            <person name="Kumano M."/>
            <person name="Kurita K."/>
            <person name="Lapidus A."/>
            <person name="Lardinois S."/>
            <person name="Lauber J."/>
            <person name="Lazarevic V."/>
            <person name="Lee S.-M."/>
            <person name="Levine A."/>
            <person name="Liu H."/>
            <person name="Masuda S."/>
            <person name="Mauel C."/>
            <person name="Medigue C."/>
            <person name="Medina N."/>
            <person name="Mellado R.P."/>
            <person name="Mizuno M."/>
            <person name="Moestl D."/>
            <person name="Nakai S."/>
            <person name="Noback M."/>
            <person name="Noone D."/>
            <person name="O'Reilly M."/>
            <person name="Ogawa K."/>
            <person name="Ogiwara A."/>
            <person name="Oudega B."/>
            <person name="Park S.-H."/>
            <person name="Parro V."/>
            <person name="Pohl T.M."/>
            <person name="Portetelle D."/>
            <person name="Porwollik S."/>
            <person name="Prescott A.M."/>
            <person name="Presecan E."/>
            <person name="Pujic P."/>
            <person name="Purnelle B."/>
            <person name="Rapoport G."/>
            <person name="Rey M."/>
            <person name="Reynolds S."/>
            <person name="Rieger M."/>
            <person name="Rivolta C."/>
            <person name="Rocha E."/>
            <person name="Roche B."/>
            <person name="Rose M."/>
            <person name="Sadaie Y."/>
            <person name="Sato T."/>
            <person name="Scanlan E."/>
            <person name="Schleich S."/>
            <person name="Schroeter R."/>
            <person name="Scoffone F."/>
            <person name="Sekiguchi J."/>
            <person name="Sekowska A."/>
            <person name="Seror S.J."/>
            <person name="Serror P."/>
            <person name="Shin B.-S."/>
            <person name="Soldo B."/>
            <person name="Sorokin A."/>
            <person name="Tacconi E."/>
            <person name="Takagi T."/>
            <person name="Takahashi H."/>
            <person name="Takemaru K."/>
            <person name="Takeuchi M."/>
            <person name="Tamakoshi A."/>
            <person name="Tanaka T."/>
            <person name="Terpstra P."/>
            <person name="Tognoni A."/>
            <person name="Tosato V."/>
            <person name="Uchiyama S."/>
            <person name="Vandenbol M."/>
            <person name="Vannier F."/>
            <person name="Vassarotti A."/>
            <person name="Viari A."/>
            <person name="Wambutt R."/>
            <person name="Wedler E."/>
            <person name="Wedler H."/>
            <person name="Weitzenegger T."/>
            <person name="Winters P."/>
            <person name="Wipat A."/>
            <person name="Yamamoto H."/>
            <person name="Yamane K."/>
            <person name="Yasumoto K."/>
            <person name="Yata K."/>
            <person name="Yoshida K."/>
            <person name="Yoshikawa H.-F."/>
            <person name="Zumstein E."/>
            <person name="Yoshikawa H."/>
            <person name="Danchin A."/>
        </authorList>
    </citation>
    <scope>NUCLEOTIDE SEQUENCE [LARGE SCALE GENOMIC DNA]</scope>
    <source>
        <strain>168</strain>
    </source>
</reference>
<protein>
    <recommendedName>
        <fullName>SPbeta prophage-derived thioredoxin-like protein YosR</fullName>
    </recommendedName>
</protein>
<proteinExistence type="inferred from homology"/>
<organism>
    <name type="scientific">Bacillus subtilis (strain 168)</name>
    <dbReference type="NCBI Taxonomy" id="224308"/>
    <lineage>
        <taxon>Bacteria</taxon>
        <taxon>Bacillati</taxon>
        <taxon>Bacillota</taxon>
        <taxon>Bacilli</taxon>
        <taxon>Bacillales</taxon>
        <taxon>Bacillaceae</taxon>
        <taxon>Bacillus</taxon>
    </lineage>
</organism>
<comment type="similarity">
    <text evidence="2">Belongs to the thioredoxin family.</text>
</comment>
<feature type="chain" id="PRO_0000360766" description="SPbeta prophage-derived thioredoxin-like protein YosR">
    <location>
        <begin position="1"/>
        <end position="80"/>
    </location>
</feature>
<feature type="domain" description="Thioredoxin">
    <location>
        <begin position="1"/>
        <end position="80"/>
    </location>
</feature>
<feature type="disulfide bond" description="Redox-active" evidence="1">
    <location>
        <begin position="11"/>
        <end position="14"/>
    </location>
</feature>
<evidence type="ECO:0000250" key="1"/>
<evidence type="ECO:0000305" key="2"/>